<sequence length="260" mass="29520">MIVREWLFFTMAPCDAAEPWQLGFQDAATPMMQGIIDLHHDIFFFLILILVFVSWILVRALWHFHYKKNPIPQRIVHGTTIEIIRTIFPSIILMFIAIPSFALLYSMDEVVVDPAITIKAIGHQWYRSYEYSDYNSSDEQSLTFDSYTIPEDDPELGQSRLLEVDNRVVVPAKTHIRIIVTSADVLHSWAVPSSGVKCDAVPGRLNQTSILVQREGVYYGQCSEICGTNHAFMPIVVEAVSRKDYGSRVSNQLIPQTGEA</sequence>
<dbReference type="EC" id="7.1.1.9"/>
<dbReference type="EMBL" id="X55297">
    <property type="protein sequence ID" value="CAA39009.1"/>
    <property type="molecule type" value="Genomic_DNA"/>
</dbReference>
<dbReference type="SMR" id="P98012"/>
<dbReference type="GO" id="GO:0005743">
    <property type="term" value="C:mitochondrial inner membrane"/>
    <property type="evidence" value="ECO:0007669"/>
    <property type="project" value="UniProtKB-SubCell"/>
</dbReference>
<dbReference type="GO" id="GO:0005507">
    <property type="term" value="F:copper ion binding"/>
    <property type="evidence" value="ECO:0007669"/>
    <property type="project" value="InterPro"/>
</dbReference>
<dbReference type="GO" id="GO:0004129">
    <property type="term" value="F:cytochrome-c oxidase activity"/>
    <property type="evidence" value="ECO:0007669"/>
    <property type="project" value="UniProtKB-EC"/>
</dbReference>
<dbReference type="GO" id="GO:0042773">
    <property type="term" value="P:ATP synthesis coupled electron transport"/>
    <property type="evidence" value="ECO:0007669"/>
    <property type="project" value="TreeGrafter"/>
</dbReference>
<dbReference type="CDD" id="cd13912">
    <property type="entry name" value="CcO_II_C"/>
    <property type="match status" value="1"/>
</dbReference>
<dbReference type="FunFam" id="1.10.287.90:FF:000004">
    <property type="entry name" value="Cytochrome c oxidase subunit 2"/>
    <property type="match status" value="1"/>
</dbReference>
<dbReference type="FunFam" id="2.60.40.420:FF:000001">
    <property type="entry name" value="Cytochrome c oxidase subunit 2"/>
    <property type="match status" value="1"/>
</dbReference>
<dbReference type="Gene3D" id="1.10.287.90">
    <property type="match status" value="1"/>
</dbReference>
<dbReference type="Gene3D" id="2.60.40.420">
    <property type="entry name" value="Cupredoxins - blue copper proteins"/>
    <property type="match status" value="1"/>
</dbReference>
<dbReference type="InterPro" id="IPR045187">
    <property type="entry name" value="CcO_II"/>
</dbReference>
<dbReference type="InterPro" id="IPR002429">
    <property type="entry name" value="CcO_II-like_C"/>
</dbReference>
<dbReference type="InterPro" id="IPR034210">
    <property type="entry name" value="CcO_II_C"/>
</dbReference>
<dbReference type="InterPro" id="IPR001505">
    <property type="entry name" value="Copper_CuA"/>
</dbReference>
<dbReference type="InterPro" id="IPR008972">
    <property type="entry name" value="Cupredoxin"/>
</dbReference>
<dbReference type="InterPro" id="IPR014222">
    <property type="entry name" value="Cyt_c_oxidase_su2"/>
</dbReference>
<dbReference type="InterPro" id="IPR011759">
    <property type="entry name" value="Cyt_c_oxidase_su2_TM_dom"/>
</dbReference>
<dbReference type="InterPro" id="IPR036257">
    <property type="entry name" value="Cyt_c_oxidase_su2_TM_sf"/>
</dbReference>
<dbReference type="NCBIfam" id="TIGR02866">
    <property type="entry name" value="CoxB"/>
    <property type="match status" value="1"/>
</dbReference>
<dbReference type="PANTHER" id="PTHR22888:SF9">
    <property type="entry name" value="CYTOCHROME C OXIDASE SUBUNIT 2"/>
    <property type="match status" value="1"/>
</dbReference>
<dbReference type="PANTHER" id="PTHR22888">
    <property type="entry name" value="CYTOCHROME C OXIDASE, SUBUNIT II"/>
    <property type="match status" value="1"/>
</dbReference>
<dbReference type="Pfam" id="PF00116">
    <property type="entry name" value="COX2"/>
    <property type="match status" value="1"/>
</dbReference>
<dbReference type="Pfam" id="PF02790">
    <property type="entry name" value="COX2_TM"/>
    <property type="match status" value="1"/>
</dbReference>
<dbReference type="PRINTS" id="PR01166">
    <property type="entry name" value="CYCOXIDASEII"/>
</dbReference>
<dbReference type="SUPFAM" id="SSF49503">
    <property type="entry name" value="Cupredoxins"/>
    <property type="match status" value="1"/>
</dbReference>
<dbReference type="SUPFAM" id="SSF81464">
    <property type="entry name" value="Cytochrome c oxidase subunit II-like, transmembrane region"/>
    <property type="match status" value="1"/>
</dbReference>
<dbReference type="PROSITE" id="PS00078">
    <property type="entry name" value="COX2"/>
    <property type="match status" value="1"/>
</dbReference>
<dbReference type="PROSITE" id="PS50857">
    <property type="entry name" value="COX2_CUA"/>
    <property type="match status" value="1"/>
</dbReference>
<dbReference type="PROSITE" id="PS50999">
    <property type="entry name" value="COX2_TM"/>
    <property type="match status" value="1"/>
</dbReference>
<gene>
    <name type="primary">COX2</name>
    <name type="synonym">COXII</name>
</gene>
<keyword id="KW-0186">Copper</keyword>
<keyword id="KW-0249">Electron transport</keyword>
<keyword id="KW-0460">Magnesium</keyword>
<keyword id="KW-0472">Membrane</keyword>
<keyword id="KW-0479">Metal-binding</keyword>
<keyword id="KW-0496">Mitochondrion</keyword>
<keyword id="KW-0999">Mitochondrion inner membrane</keyword>
<keyword id="KW-0679">Respiratory chain</keyword>
<keyword id="KW-0691">RNA editing</keyword>
<keyword id="KW-1278">Translocase</keyword>
<keyword id="KW-0812">Transmembrane</keyword>
<keyword id="KW-1133">Transmembrane helix</keyword>
<keyword id="KW-0813">Transport</keyword>
<feature type="chain" id="PRO_0000183509" description="Cytochrome c oxidase subunit 2">
    <location>
        <begin position="1"/>
        <end position="260"/>
    </location>
</feature>
<feature type="topological domain" description="Mitochondrial intermembrane" evidence="2">
    <location>
        <begin position="1"/>
        <end position="41"/>
    </location>
</feature>
<feature type="transmembrane region" description="Helical" evidence="2">
    <location>
        <begin position="42"/>
        <end position="58"/>
    </location>
</feature>
<feature type="topological domain" description="Mitochondrial matrix" evidence="2">
    <location>
        <begin position="59"/>
        <end position="82"/>
    </location>
</feature>
<feature type="transmembrane region" description="Helical" evidence="2">
    <location>
        <begin position="83"/>
        <end position="104"/>
    </location>
</feature>
<feature type="topological domain" description="Mitochondrial intermembrane" evidence="2">
    <location>
        <begin position="105"/>
        <end position="260"/>
    </location>
</feature>
<feature type="binding site" evidence="1">
    <location>
        <position position="187"/>
    </location>
    <ligand>
        <name>Cu cation</name>
        <dbReference type="ChEBI" id="CHEBI:23378"/>
        <label>A1</label>
    </ligand>
</feature>
<feature type="binding site" evidence="1">
    <location>
        <position position="222"/>
    </location>
    <ligand>
        <name>Cu cation</name>
        <dbReference type="ChEBI" id="CHEBI:23378"/>
        <label>A1</label>
    </ligand>
</feature>
<feature type="binding site" evidence="1">
    <location>
        <position position="222"/>
    </location>
    <ligand>
        <name>Cu cation</name>
        <dbReference type="ChEBI" id="CHEBI:23378"/>
        <label>A2</label>
    </ligand>
</feature>
<feature type="binding site" evidence="1">
    <location>
        <position position="224"/>
    </location>
    <ligand>
        <name>Cu cation</name>
        <dbReference type="ChEBI" id="CHEBI:23378"/>
        <label>A2</label>
    </ligand>
</feature>
<feature type="binding site" evidence="1">
    <location>
        <position position="224"/>
    </location>
    <ligand>
        <name>Mg(2+)</name>
        <dbReference type="ChEBI" id="CHEBI:18420"/>
        <note>ligand shared with subunit 1</note>
    </ligand>
</feature>
<feature type="binding site" evidence="1">
    <location>
        <position position="226"/>
    </location>
    <ligand>
        <name>Cu cation</name>
        <dbReference type="ChEBI" id="CHEBI:23378"/>
        <label>A1</label>
    </ligand>
</feature>
<feature type="binding site" evidence="1">
    <location>
        <position position="226"/>
    </location>
    <ligand>
        <name>Cu cation</name>
        <dbReference type="ChEBI" id="CHEBI:23378"/>
        <label>A2</label>
    </ligand>
</feature>
<feature type="binding site" evidence="1">
    <location>
        <position position="230"/>
    </location>
    <ligand>
        <name>Cu cation</name>
        <dbReference type="ChEBI" id="CHEBI:23378"/>
        <label>A2</label>
    </ligand>
</feature>
<feature type="binding site" evidence="1">
    <location>
        <position position="233"/>
    </location>
    <ligand>
        <name>Cu cation</name>
        <dbReference type="ChEBI" id="CHEBI:23378"/>
        <label>A1</label>
    </ligand>
</feature>
<protein>
    <recommendedName>
        <fullName>Cytochrome c oxidase subunit 2</fullName>
        <ecNumber>7.1.1.9</ecNumber>
    </recommendedName>
    <alternativeName>
        <fullName>Cytochrome c oxidase polypeptide II</fullName>
    </alternativeName>
</protein>
<name>COX2_BETVU</name>
<geneLocation type="mitochondrion"/>
<reference key="1">
    <citation type="journal article" date="1991" name="Plant Mol. Biol.">
        <title>The cytochrome oxidase II gene in mitochondria of the sugar-beet Beta vulgaris L.</title>
        <authorList>
            <person name="Mann V."/>
            <person name="Ekstein I."/>
            <person name="Nissen H."/>
            <person name="Hiser C."/>
            <person name="McLntosh L."/>
            <person name="Hirschberg J."/>
        </authorList>
    </citation>
    <scope>NUCLEOTIDE SEQUENCE [GENOMIC DNA]</scope>
    <scope>SUGGESTION OF RNA EDITING</scope>
    <source>
        <strain>cv. NB-1</strain>
        <tissue>Root</tissue>
    </source>
</reference>
<accession>P98012</accession>
<evidence type="ECO:0000250" key="1">
    <source>
        <dbReference type="UniProtKB" id="P00410"/>
    </source>
</evidence>
<evidence type="ECO:0000255" key="2"/>
<evidence type="ECO:0000305" key="3"/>
<evidence type="ECO:0000305" key="4">
    <source>
    </source>
</evidence>
<comment type="function">
    <text evidence="1">Component of the cytochrome c oxidase, the last enzyme in the mitochondrial electron transport chain which drives oxidative phosphorylation. The respiratory chain contains 3 multisubunit complexes succinate dehydrogenase (complex II, CII), ubiquinol-cytochrome c oxidoreductase (cytochrome b-c1 complex, complex III, CIII) and cytochrome c oxidase (complex IV, CIV), that cooperate to transfer electrons derived from NADH and succinate to molecular oxygen, creating an electrochemical gradient over the inner membrane that drives transmembrane transport and the ATP synthase. Cytochrome c oxidase is the component of the respiratory chain that catalyzes the reduction of oxygen to water. Electrons originating from reduced cytochrome c in the intermembrane space (IMS) are transferred via the dinuclear copper A center (CU(A)) of subunit 2 and heme A of subunit 1 to the active site in subunit 1, a binuclear center (BNC) formed by heme A3 and copper B (CU(B)). The BNC reduces molecular oxygen to 2 water molecules using 4 electrons from cytochrome c in the IMS and 4 protons from the mitochondrial matrix.</text>
</comment>
<comment type="catalytic activity">
    <reaction evidence="1">
        <text>4 Fe(II)-[cytochrome c] + O2 + 8 H(+)(in) = 4 Fe(III)-[cytochrome c] + 2 H2O + 4 H(+)(out)</text>
        <dbReference type="Rhea" id="RHEA:11436"/>
        <dbReference type="Rhea" id="RHEA-COMP:10350"/>
        <dbReference type="Rhea" id="RHEA-COMP:14399"/>
        <dbReference type="ChEBI" id="CHEBI:15377"/>
        <dbReference type="ChEBI" id="CHEBI:15378"/>
        <dbReference type="ChEBI" id="CHEBI:15379"/>
        <dbReference type="ChEBI" id="CHEBI:29033"/>
        <dbReference type="ChEBI" id="CHEBI:29034"/>
        <dbReference type="EC" id="7.1.1.9"/>
    </reaction>
    <physiologicalReaction direction="left-to-right" evidence="1">
        <dbReference type="Rhea" id="RHEA:11437"/>
    </physiologicalReaction>
</comment>
<comment type="cofactor">
    <cofactor evidence="1">
        <name>Cu cation</name>
        <dbReference type="ChEBI" id="CHEBI:23378"/>
    </cofactor>
    <text evidence="1">Binds a dinuclear copper A center per subunit.</text>
</comment>
<comment type="subunit">
    <text evidence="1">Component of the cytochrome c oxidase (complex IV, CIV), a multisubunit enzyme composed of a catalytic core of 3 subunits and several supernumerary subunits. The complex exists as a monomer or a dimer and forms supercomplexes (SCs) in the inner mitochondrial membrane with ubiquinol-cytochrome c oxidoreductase (cytochrome b-c1 complex, complex III, CIII).</text>
</comment>
<comment type="subcellular location">
    <subcellularLocation>
        <location evidence="1">Mitochondrion inner membrane</location>
        <topology evidence="1">Multi-pass membrane protein</topology>
    </subcellularLocation>
</comment>
<comment type="RNA editing" locationType="Undetermined">
    <text evidence="4">Due to conserved RNA editing events, positions 13, 54, 85, 127, 148, 154, 159, 194 and 248 might change.</text>
</comment>
<comment type="similarity">
    <text evidence="3">Belongs to the cytochrome c oxidase subunit 2 family.</text>
</comment>
<proteinExistence type="evidence at transcript level"/>
<organism>
    <name type="scientific">Beta vulgaris</name>
    <name type="common">Sugar beet</name>
    <dbReference type="NCBI Taxonomy" id="161934"/>
    <lineage>
        <taxon>Eukaryota</taxon>
        <taxon>Viridiplantae</taxon>
        <taxon>Streptophyta</taxon>
        <taxon>Embryophyta</taxon>
        <taxon>Tracheophyta</taxon>
        <taxon>Spermatophyta</taxon>
        <taxon>Magnoliopsida</taxon>
        <taxon>eudicotyledons</taxon>
        <taxon>Gunneridae</taxon>
        <taxon>Pentapetalae</taxon>
        <taxon>Caryophyllales</taxon>
        <taxon>Chenopodiaceae</taxon>
        <taxon>Betoideae</taxon>
        <taxon>Beta</taxon>
    </lineage>
</organism>